<evidence type="ECO:0000250" key="1"/>
<evidence type="ECO:0000255" key="2">
    <source>
        <dbReference type="HAMAP-Rule" id="MF_01057"/>
    </source>
</evidence>
<keyword id="KW-0489">Methyltransferase</keyword>
<keyword id="KW-1185">Reference proteome</keyword>
<keyword id="KW-0949">S-adenosyl-L-methionine</keyword>
<keyword id="KW-0808">Transferase</keyword>
<keyword id="KW-0819">tRNA processing</keyword>
<gene>
    <name evidence="2" type="primary">trmB</name>
    <name type="ordered locus">stu1606</name>
</gene>
<name>TRMB_STRT2</name>
<protein>
    <recommendedName>
        <fullName evidence="2">tRNA (guanine-N(7)-)-methyltransferase</fullName>
        <ecNumber evidence="2">2.1.1.33</ecNumber>
    </recommendedName>
    <alternativeName>
        <fullName evidence="2">tRNA (guanine(46)-N(7))-methyltransferase</fullName>
    </alternativeName>
    <alternativeName>
        <fullName evidence="2">tRNA(m7G46)-methyltransferase</fullName>
    </alternativeName>
</protein>
<dbReference type="EC" id="2.1.1.33" evidence="2"/>
<dbReference type="EMBL" id="CP000023">
    <property type="protein sequence ID" value="AAV61209.1"/>
    <property type="molecule type" value="Genomic_DNA"/>
</dbReference>
<dbReference type="RefSeq" id="WP_002947526.1">
    <property type="nucleotide sequence ID" value="NC_006448.1"/>
</dbReference>
<dbReference type="SMR" id="Q5M332"/>
<dbReference type="STRING" id="264199.stu1606"/>
<dbReference type="GeneID" id="66899353"/>
<dbReference type="KEGG" id="stl:stu1606"/>
<dbReference type="eggNOG" id="COG0220">
    <property type="taxonomic scope" value="Bacteria"/>
</dbReference>
<dbReference type="HOGENOM" id="CLU_050910_2_1_9"/>
<dbReference type="UniPathway" id="UPA00989"/>
<dbReference type="Proteomes" id="UP000001170">
    <property type="component" value="Chromosome"/>
</dbReference>
<dbReference type="GO" id="GO:0043527">
    <property type="term" value="C:tRNA methyltransferase complex"/>
    <property type="evidence" value="ECO:0007669"/>
    <property type="project" value="TreeGrafter"/>
</dbReference>
<dbReference type="GO" id="GO:0008176">
    <property type="term" value="F:tRNA (guanine(46)-N7)-methyltransferase activity"/>
    <property type="evidence" value="ECO:0007669"/>
    <property type="project" value="UniProtKB-UniRule"/>
</dbReference>
<dbReference type="CDD" id="cd02440">
    <property type="entry name" value="AdoMet_MTases"/>
    <property type="match status" value="1"/>
</dbReference>
<dbReference type="FunFam" id="3.40.50.150:FF:000035">
    <property type="entry name" value="tRNA (guanine-N(7)-)-methyltransferase"/>
    <property type="match status" value="1"/>
</dbReference>
<dbReference type="Gene3D" id="3.40.50.150">
    <property type="entry name" value="Vaccinia Virus protein VP39"/>
    <property type="match status" value="1"/>
</dbReference>
<dbReference type="HAMAP" id="MF_01057">
    <property type="entry name" value="tRNA_methyltr_TrmB"/>
    <property type="match status" value="1"/>
</dbReference>
<dbReference type="InterPro" id="IPR029063">
    <property type="entry name" value="SAM-dependent_MTases_sf"/>
</dbReference>
<dbReference type="InterPro" id="IPR003358">
    <property type="entry name" value="tRNA_(Gua-N-7)_MeTrfase_Trmb"/>
</dbReference>
<dbReference type="InterPro" id="IPR055361">
    <property type="entry name" value="tRNA_methyltr_TrmB_bact"/>
</dbReference>
<dbReference type="NCBIfam" id="NF001080">
    <property type="entry name" value="PRK00121.2-2"/>
    <property type="match status" value="1"/>
</dbReference>
<dbReference type="NCBIfam" id="TIGR00091">
    <property type="entry name" value="tRNA (guanosine(46)-N7)-methyltransferase TrmB"/>
    <property type="match status" value="1"/>
</dbReference>
<dbReference type="PANTHER" id="PTHR23417">
    <property type="entry name" value="3-DEOXY-D-MANNO-OCTULOSONIC-ACID TRANSFERASE/TRNA GUANINE-N 7 - -METHYLTRANSFERASE"/>
    <property type="match status" value="1"/>
</dbReference>
<dbReference type="PANTHER" id="PTHR23417:SF14">
    <property type="entry name" value="PENTACOTRIPEPTIDE-REPEAT REGION OF PRORP DOMAIN-CONTAINING PROTEIN"/>
    <property type="match status" value="1"/>
</dbReference>
<dbReference type="Pfam" id="PF02390">
    <property type="entry name" value="Methyltransf_4"/>
    <property type="match status" value="1"/>
</dbReference>
<dbReference type="SUPFAM" id="SSF53335">
    <property type="entry name" value="S-adenosyl-L-methionine-dependent methyltransferases"/>
    <property type="match status" value="1"/>
</dbReference>
<dbReference type="PROSITE" id="PS51625">
    <property type="entry name" value="SAM_MT_TRMB"/>
    <property type="match status" value="1"/>
</dbReference>
<comment type="function">
    <text evidence="2">Catalyzes the formation of N(7)-methylguanine at position 46 (m7G46) in tRNA.</text>
</comment>
<comment type="catalytic activity">
    <reaction evidence="2">
        <text>guanosine(46) in tRNA + S-adenosyl-L-methionine = N(7)-methylguanosine(46) in tRNA + S-adenosyl-L-homocysteine</text>
        <dbReference type="Rhea" id="RHEA:42708"/>
        <dbReference type="Rhea" id="RHEA-COMP:10188"/>
        <dbReference type="Rhea" id="RHEA-COMP:10189"/>
        <dbReference type="ChEBI" id="CHEBI:57856"/>
        <dbReference type="ChEBI" id="CHEBI:59789"/>
        <dbReference type="ChEBI" id="CHEBI:74269"/>
        <dbReference type="ChEBI" id="CHEBI:74480"/>
        <dbReference type="EC" id="2.1.1.33"/>
    </reaction>
</comment>
<comment type="pathway">
    <text evidence="2">tRNA modification; N(7)-methylguanine-tRNA biosynthesis.</text>
</comment>
<comment type="similarity">
    <text evidence="2">Belongs to the class I-like SAM-binding methyltransferase superfamily. TrmB family.</text>
</comment>
<organism>
    <name type="scientific">Streptococcus thermophilus (strain ATCC BAA-250 / LMG 18311)</name>
    <dbReference type="NCBI Taxonomy" id="264199"/>
    <lineage>
        <taxon>Bacteria</taxon>
        <taxon>Bacillati</taxon>
        <taxon>Bacillota</taxon>
        <taxon>Bacilli</taxon>
        <taxon>Lactobacillales</taxon>
        <taxon>Streptococcaceae</taxon>
        <taxon>Streptococcus</taxon>
    </lineage>
</organism>
<reference key="1">
    <citation type="journal article" date="2004" name="Nat. Biotechnol.">
        <title>Complete sequence and comparative genome analysis of the dairy bacterium Streptococcus thermophilus.</title>
        <authorList>
            <person name="Bolotin A."/>
            <person name="Quinquis B."/>
            <person name="Renault P."/>
            <person name="Sorokin A."/>
            <person name="Ehrlich S.D."/>
            <person name="Kulakauskas S."/>
            <person name="Lapidus A."/>
            <person name="Goltsman E."/>
            <person name="Mazur M."/>
            <person name="Pusch G.D."/>
            <person name="Fonstein M."/>
            <person name="Overbeek R."/>
            <person name="Kyprides N."/>
            <person name="Purnelle B."/>
            <person name="Prozzi D."/>
            <person name="Ngui K."/>
            <person name="Masuy D."/>
            <person name="Hancy F."/>
            <person name="Burteau S."/>
            <person name="Boutry M."/>
            <person name="Delcour J."/>
            <person name="Goffeau A."/>
            <person name="Hols P."/>
        </authorList>
    </citation>
    <scope>NUCLEOTIDE SEQUENCE [LARGE SCALE GENOMIC DNA]</scope>
    <source>
        <strain>ATCC BAA-250 / LMG 18311</strain>
    </source>
</reference>
<sequence length="213" mass="24576">MRVRKRKGAEEHLANHPQYVILEPEAAKGKWHQIFGNDNPIHIEVGSGKGAFITGMAQQNPDINYIGIDIQLSVLSYALDKVLASGVENVKLLRVDGSALTNYFEDGEVDMMYLNFSDPWPKSRHEKRRLTYKTFLDTYKQILPKNGEIHLKTDNRGFFEYSLTSFSQYGMILNKVWLDLHASDYEGNVMTEYERKFSEKGQAIYRVEAQFKD</sequence>
<feature type="chain" id="PRO_0000229202" description="tRNA (guanine-N(7)-)-methyltransferase">
    <location>
        <begin position="1"/>
        <end position="213"/>
    </location>
</feature>
<feature type="region of interest" description="Interaction with RNA" evidence="2">
    <location>
        <begin position="124"/>
        <end position="129"/>
    </location>
</feature>
<feature type="active site" evidence="1">
    <location>
        <position position="118"/>
    </location>
</feature>
<feature type="binding site" evidence="2">
    <location>
        <position position="44"/>
    </location>
    <ligand>
        <name>S-adenosyl-L-methionine</name>
        <dbReference type="ChEBI" id="CHEBI:59789"/>
    </ligand>
</feature>
<feature type="binding site" evidence="2">
    <location>
        <position position="69"/>
    </location>
    <ligand>
        <name>S-adenosyl-L-methionine</name>
        <dbReference type="ChEBI" id="CHEBI:59789"/>
    </ligand>
</feature>
<feature type="binding site" evidence="2">
    <location>
        <position position="96"/>
    </location>
    <ligand>
        <name>S-adenosyl-L-methionine</name>
        <dbReference type="ChEBI" id="CHEBI:59789"/>
    </ligand>
</feature>
<feature type="binding site" evidence="2">
    <location>
        <position position="118"/>
    </location>
    <ligand>
        <name>S-adenosyl-L-methionine</name>
        <dbReference type="ChEBI" id="CHEBI:59789"/>
    </ligand>
</feature>
<feature type="binding site" evidence="2">
    <location>
        <position position="122"/>
    </location>
    <ligand>
        <name>substrate</name>
    </ligand>
</feature>
<feature type="binding site" evidence="2">
    <location>
        <position position="154"/>
    </location>
    <ligand>
        <name>substrate</name>
    </ligand>
</feature>
<feature type="binding site" evidence="2">
    <location>
        <begin position="191"/>
        <end position="194"/>
    </location>
    <ligand>
        <name>substrate</name>
    </ligand>
</feature>
<accession>Q5M332</accession>
<proteinExistence type="inferred from homology"/>